<keyword id="KW-0012">Acyltransferase</keyword>
<keyword id="KW-0028">Amino-acid biosynthesis</keyword>
<keyword id="KW-0055">Arginine biosynthesis</keyword>
<keyword id="KW-0068">Autocatalytic cleavage</keyword>
<keyword id="KW-0496">Mitochondrion</keyword>
<keyword id="KW-0511">Multifunctional enzyme</keyword>
<keyword id="KW-1185">Reference proteome</keyword>
<keyword id="KW-0808">Transferase</keyword>
<comment type="function">
    <text evidence="1">Catalyzes two activities which are involved in the cyclic version of arginine biosynthesis: the synthesis of acetylglutamate from glutamate and acetyl-CoA, and of ornithine by transacetylation between acetylornithine and glutamate.</text>
</comment>
<comment type="catalytic activity">
    <reaction evidence="1">
        <text>N(2)-acetyl-L-ornithine + L-glutamate = N-acetyl-L-glutamate + L-ornithine</text>
        <dbReference type="Rhea" id="RHEA:15349"/>
        <dbReference type="ChEBI" id="CHEBI:29985"/>
        <dbReference type="ChEBI" id="CHEBI:44337"/>
        <dbReference type="ChEBI" id="CHEBI:46911"/>
        <dbReference type="ChEBI" id="CHEBI:57805"/>
        <dbReference type="EC" id="2.3.1.35"/>
    </reaction>
</comment>
<comment type="catalytic activity">
    <reaction evidence="1">
        <text>L-glutamate + acetyl-CoA = N-acetyl-L-glutamate + CoA + H(+)</text>
        <dbReference type="Rhea" id="RHEA:24292"/>
        <dbReference type="ChEBI" id="CHEBI:15378"/>
        <dbReference type="ChEBI" id="CHEBI:29985"/>
        <dbReference type="ChEBI" id="CHEBI:44337"/>
        <dbReference type="ChEBI" id="CHEBI:57287"/>
        <dbReference type="ChEBI" id="CHEBI:57288"/>
        <dbReference type="EC" id="2.3.1.1"/>
    </reaction>
</comment>
<comment type="pathway">
    <text evidence="1">Amino-acid biosynthesis; L-arginine biosynthesis; L-ornithine and N-acetyl-L-glutamate from L-glutamate and N(2)-acetyl-L-ornithine (cyclic): step 1/1.</text>
</comment>
<comment type="pathway">
    <text evidence="1">Amino-acid biosynthesis; L-arginine biosynthesis; N(2)-acetyl-L-ornithine from L-glutamate: step 1/4.</text>
</comment>
<comment type="subunit">
    <text evidence="1">Heterodimer of an alpha and a beta chain.</text>
</comment>
<comment type="subcellular location">
    <subcellularLocation>
        <location evidence="1">Mitochondrion matrix</location>
    </subcellularLocation>
</comment>
<comment type="PTM">
    <text evidence="1">The alpha and beta chains are autoproteolytically processed from a single precursor protein within the mitochondrion.</text>
</comment>
<comment type="miscellaneous">
    <text evidence="1">This protein may be expected to contain an N-terminal transit peptide but none has been predicted.</text>
</comment>
<comment type="similarity">
    <text evidence="1">Belongs to the ArgJ family.</text>
</comment>
<dbReference type="EC" id="2.3.1.35" evidence="1"/>
<dbReference type="EC" id="2.3.1.1" evidence="1"/>
<dbReference type="EMBL" id="KE651168">
    <property type="protein sequence ID" value="EEB06550.1"/>
    <property type="molecule type" value="Genomic_DNA"/>
</dbReference>
<dbReference type="RefSeq" id="XP_002172843.1">
    <property type="nucleotide sequence ID" value="XM_002172807.2"/>
</dbReference>
<dbReference type="SMR" id="B6JYD2"/>
<dbReference type="STRING" id="402676.B6JYD2"/>
<dbReference type="MEROPS" id="T05.001"/>
<dbReference type="EnsemblFungi" id="EEB06550">
    <property type="protein sequence ID" value="EEB06550"/>
    <property type="gene ID" value="SJAG_01592"/>
</dbReference>
<dbReference type="GeneID" id="7052279"/>
<dbReference type="JaponicusDB" id="SJAG_01592">
    <property type="gene designation" value="aga1"/>
</dbReference>
<dbReference type="VEuPathDB" id="FungiDB:SJAG_01592"/>
<dbReference type="eggNOG" id="KOG2786">
    <property type="taxonomic scope" value="Eukaryota"/>
</dbReference>
<dbReference type="HOGENOM" id="CLU_027172_1_0_1"/>
<dbReference type="OMA" id="WGRIVMA"/>
<dbReference type="OrthoDB" id="2017946at2759"/>
<dbReference type="UniPathway" id="UPA00068">
    <property type="reaction ID" value="UER00106"/>
</dbReference>
<dbReference type="UniPathway" id="UPA00068">
    <property type="reaction ID" value="UER00111"/>
</dbReference>
<dbReference type="Proteomes" id="UP000001744">
    <property type="component" value="Unassembled WGS sequence"/>
</dbReference>
<dbReference type="GO" id="GO:0005759">
    <property type="term" value="C:mitochondrial matrix"/>
    <property type="evidence" value="ECO:0000318"/>
    <property type="project" value="GO_Central"/>
</dbReference>
<dbReference type="GO" id="GO:0004358">
    <property type="term" value="F:glutamate N-acetyltransferase activity"/>
    <property type="evidence" value="ECO:0007669"/>
    <property type="project" value="UniProtKB-UniRule"/>
</dbReference>
<dbReference type="GO" id="GO:0004042">
    <property type="term" value="F:L-glutamate N-acetyltransferase activity"/>
    <property type="evidence" value="ECO:0000318"/>
    <property type="project" value="GO_Central"/>
</dbReference>
<dbReference type="GO" id="GO:0006526">
    <property type="term" value="P:L-arginine biosynthetic process"/>
    <property type="evidence" value="ECO:0007669"/>
    <property type="project" value="UniProtKB-UniRule"/>
</dbReference>
<dbReference type="GO" id="GO:0006592">
    <property type="term" value="P:ornithine biosynthetic process"/>
    <property type="evidence" value="ECO:0000318"/>
    <property type="project" value="GO_Central"/>
</dbReference>
<dbReference type="CDD" id="cd02152">
    <property type="entry name" value="OAT"/>
    <property type="match status" value="1"/>
</dbReference>
<dbReference type="FunFam" id="3.60.70.12:FF:000001">
    <property type="entry name" value="Arginine biosynthesis bifunctional protein ArgJ, chloroplastic"/>
    <property type="match status" value="1"/>
</dbReference>
<dbReference type="FunFam" id="3.10.20.340:FF:000002">
    <property type="entry name" value="Arginine biosynthesis bifunctional protein ArgJ, mitochondrial"/>
    <property type="match status" value="1"/>
</dbReference>
<dbReference type="FunFam" id="3.30.2330.10:FF:000001">
    <property type="entry name" value="Arginine biosynthesis bifunctional protein ArgJ, mitochondrial"/>
    <property type="match status" value="1"/>
</dbReference>
<dbReference type="Gene3D" id="3.30.2330.10">
    <property type="entry name" value="arginine biosynthesis bifunctional protein suprefamily"/>
    <property type="match status" value="1"/>
</dbReference>
<dbReference type="Gene3D" id="3.10.20.340">
    <property type="entry name" value="ArgJ beta chain, C-terminal domain"/>
    <property type="match status" value="1"/>
</dbReference>
<dbReference type="Gene3D" id="3.60.70.12">
    <property type="entry name" value="L-amino peptidase D-ALA esterase/amidase"/>
    <property type="match status" value="1"/>
</dbReference>
<dbReference type="HAMAP" id="MF_01106">
    <property type="entry name" value="ArgJ"/>
    <property type="match status" value="1"/>
</dbReference>
<dbReference type="InterPro" id="IPR002813">
    <property type="entry name" value="Arg_biosynth_ArgJ"/>
</dbReference>
<dbReference type="InterPro" id="IPR016117">
    <property type="entry name" value="ArgJ-like_dom_sf"/>
</dbReference>
<dbReference type="InterPro" id="IPR042195">
    <property type="entry name" value="ArgJ_beta_C"/>
</dbReference>
<dbReference type="NCBIfam" id="TIGR00120">
    <property type="entry name" value="ArgJ"/>
    <property type="match status" value="1"/>
</dbReference>
<dbReference type="NCBIfam" id="NF003802">
    <property type="entry name" value="PRK05388.1"/>
    <property type="match status" value="1"/>
</dbReference>
<dbReference type="PANTHER" id="PTHR23100">
    <property type="entry name" value="ARGININE BIOSYNTHESIS BIFUNCTIONAL PROTEIN ARGJ"/>
    <property type="match status" value="1"/>
</dbReference>
<dbReference type="PANTHER" id="PTHR23100:SF0">
    <property type="entry name" value="ARGININE BIOSYNTHESIS BIFUNCTIONAL PROTEIN ARGJ, MITOCHONDRIAL"/>
    <property type="match status" value="1"/>
</dbReference>
<dbReference type="Pfam" id="PF01960">
    <property type="entry name" value="ArgJ"/>
    <property type="match status" value="1"/>
</dbReference>
<dbReference type="SUPFAM" id="SSF56266">
    <property type="entry name" value="DmpA/ArgJ-like"/>
    <property type="match status" value="1"/>
</dbReference>
<name>ARGJ_SCHJY</name>
<feature type="chain" id="PRO_0000398106" description="Arginine biosynthesis bifunctional protein ArgJ alpha chain" evidence="1">
    <location>
        <begin position="1"/>
        <end position="215"/>
    </location>
</feature>
<feature type="chain" id="PRO_0000398107" description="Arginine biosynthesis bifunctional protein ArgJ beta chain" evidence="1">
    <location>
        <begin position="216"/>
        <end position="435"/>
    </location>
</feature>
<feature type="active site" description="Nucleophile" evidence="1">
    <location>
        <position position="216"/>
    </location>
</feature>
<feature type="binding site" evidence="1">
    <location>
        <position position="179"/>
    </location>
    <ligand>
        <name>substrate</name>
    </ligand>
</feature>
<feature type="binding site" evidence="1">
    <location>
        <position position="205"/>
    </location>
    <ligand>
        <name>substrate</name>
    </ligand>
</feature>
<feature type="binding site" evidence="1">
    <location>
        <position position="216"/>
    </location>
    <ligand>
        <name>substrate</name>
    </ligand>
</feature>
<feature type="binding site" evidence="1">
    <location>
        <position position="302"/>
    </location>
    <ligand>
        <name>substrate</name>
    </ligand>
</feature>
<feature type="binding site" evidence="1">
    <location>
        <position position="430"/>
    </location>
    <ligand>
        <name>substrate</name>
    </ligand>
</feature>
<feature type="binding site" evidence="1">
    <location>
        <position position="435"/>
    </location>
    <ligand>
        <name>substrate</name>
    </ligand>
</feature>
<feature type="site" description="Involved in the stabilization of negative charge on the oxyanion by the formation of the oxyanion hole" evidence="1">
    <location>
        <position position="140"/>
    </location>
</feature>
<feature type="site" description="Involved in the stabilization of negative charge on the oxyanion by the formation of the oxyanion hole" evidence="1">
    <location>
        <position position="141"/>
    </location>
</feature>
<feature type="site" description="Cleavage; by autolysis" evidence="1">
    <location>
        <begin position="215"/>
        <end position="216"/>
    </location>
</feature>
<proteinExistence type="inferred from homology"/>
<organism>
    <name type="scientific">Schizosaccharomyces japonicus (strain yFS275 / FY16936)</name>
    <name type="common">Fission yeast</name>
    <dbReference type="NCBI Taxonomy" id="402676"/>
    <lineage>
        <taxon>Eukaryota</taxon>
        <taxon>Fungi</taxon>
        <taxon>Dikarya</taxon>
        <taxon>Ascomycota</taxon>
        <taxon>Taphrinomycotina</taxon>
        <taxon>Schizosaccharomycetes</taxon>
        <taxon>Schizosaccharomycetales</taxon>
        <taxon>Schizosaccharomycetaceae</taxon>
        <taxon>Schizosaccharomyces</taxon>
    </lineage>
</organism>
<gene>
    <name type="ORF">SJAG_01592</name>
</gene>
<reference key="1">
    <citation type="journal article" date="2011" name="Science">
        <title>Comparative functional genomics of the fission yeasts.</title>
        <authorList>
            <person name="Rhind N."/>
            <person name="Chen Z."/>
            <person name="Yassour M."/>
            <person name="Thompson D.A."/>
            <person name="Haas B.J."/>
            <person name="Habib N."/>
            <person name="Wapinski I."/>
            <person name="Roy S."/>
            <person name="Lin M.F."/>
            <person name="Heiman D.I."/>
            <person name="Young S.K."/>
            <person name="Furuya K."/>
            <person name="Guo Y."/>
            <person name="Pidoux A."/>
            <person name="Chen H.M."/>
            <person name="Robbertse B."/>
            <person name="Goldberg J.M."/>
            <person name="Aoki K."/>
            <person name="Bayne E.H."/>
            <person name="Berlin A.M."/>
            <person name="Desjardins C.A."/>
            <person name="Dobbs E."/>
            <person name="Dukaj L."/>
            <person name="Fan L."/>
            <person name="FitzGerald M.G."/>
            <person name="French C."/>
            <person name="Gujja S."/>
            <person name="Hansen K."/>
            <person name="Keifenheim D."/>
            <person name="Levin J.Z."/>
            <person name="Mosher R.A."/>
            <person name="Mueller C.A."/>
            <person name="Pfiffner J."/>
            <person name="Priest M."/>
            <person name="Russ C."/>
            <person name="Smialowska A."/>
            <person name="Swoboda P."/>
            <person name="Sykes S.M."/>
            <person name="Vaughn M."/>
            <person name="Vengrova S."/>
            <person name="Yoder R."/>
            <person name="Zeng Q."/>
            <person name="Allshire R."/>
            <person name="Baulcombe D."/>
            <person name="Birren B.W."/>
            <person name="Brown W."/>
            <person name="Ekwall K."/>
            <person name="Kellis M."/>
            <person name="Leatherwood J."/>
            <person name="Levin H."/>
            <person name="Margalit H."/>
            <person name="Martienssen R."/>
            <person name="Nieduszynski C.A."/>
            <person name="Spatafora J.W."/>
            <person name="Friedman N."/>
            <person name="Dalgaard J.Z."/>
            <person name="Baumann P."/>
            <person name="Niki H."/>
            <person name="Regev A."/>
            <person name="Nusbaum C."/>
        </authorList>
    </citation>
    <scope>NUCLEOTIDE SEQUENCE [LARGE SCALE GENOMIC DNA]</scope>
    <source>
        <strain>yFS275 / FY16936</strain>
    </source>
</reference>
<sequence length="435" mass="45929">MSGLMFRFPFRRFVATMPDKTKYIAKSGTYPKGFLINGVSSGVKAKGALDLTMLVSEKPCNAAAVFTKNAFQAAPVRVSRETLQQTKGQGIQCLVVNSGCANAVTGSGGVQDARLITALADKAVLGRGDGGLPSTLVMSTGVIGQRLKMDKISSGVMKAIEGLGSSHEHWMRGAKAICTTDTFPKVVSQEFSVNGQTYRIAGLAKGAGMINPNLATLLGFFATDAPVAVEAVQQILREAVDKSFNAISIDGDTSTNDTIAFLANGASGGPEIDVSSPAYEELKQSVTGIAQKLSQLVVRDGEGATKFVTIRVRGAATEADAKLVAATISNSALVKTAFFGEDANWGRILCAIGYSGAIVNPKATSVSFVPADQTESLRLLVLGEPQNVDEERASEILSHDEFGLDVDLGSGNHETVSWTCDFSYEYVRINADYRS</sequence>
<evidence type="ECO:0000255" key="1">
    <source>
        <dbReference type="HAMAP-Rule" id="MF_03124"/>
    </source>
</evidence>
<protein>
    <recommendedName>
        <fullName evidence="1">Arginine biosynthesis bifunctional protein ArgJ, mitochondrial</fullName>
    </recommendedName>
    <domain>
        <recommendedName>
            <fullName evidence="1">Glutamate N-acetyltransferase</fullName>
            <shortName evidence="1">GAT</shortName>
            <ecNumber evidence="1">2.3.1.35</ecNumber>
        </recommendedName>
        <alternativeName>
            <fullName evidence="1">Ornithine acetyltransferase</fullName>
            <shortName evidence="1">OATase</shortName>
        </alternativeName>
        <alternativeName>
            <fullName evidence="1">Ornithine transacetylase</fullName>
        </alternativeName>
    </domain>
    <domain>
        <recommendedName>
            <fullName evidence="1">Amino-acid acetyltransferase</fullName>
            <ecNumber evidence="1">2.3.1.1</ecNumber>
        </recommendedName>
        <alternativeName>
            <fullName evidence="1">N-acetylglutamate synthase</fullName>
            <shortName evidence="1">AGS</shortName>
        </alternativeName>
    </domain>
    <component>
        <recommendedName>
            <fullName evidence="1">Arginine biosynthesis bifunctional protein ArgJ alpha chain</fullName>
        </recommendedName>
    </component>
    <component>
        <recommendedName>
            <fullName evidence="1">Arginine biosynthesis bifunctional protein ArgJ beta chain</fullName>
        </recommendedName>
    </component>
</protein>
<accession>B6JYD2</accession>